<protein>
    <recommendedName>
        <fullName evidence="1">Large ribosomal subunit protein eL21</fullName>
    </recommendedName>
    <alternativeName>
        <fullName evidence="2">50S ribosomal protein L21e</fullName>
    </alternativeName>
</protein>
<organism>
    <name type="scientific">Staphylothermus marinus (strain ATCC 43588 / DSM 3639 / JCM 9404 / F1)</name>
    <dbReference type="NCBI Taxonomy" id="399550"/>
    <lineage>
        <taxon>Archaea</taxon>
        <taxon>Thermoproteota</taxon>
        <taxon>Thermoprotei</taxon>
        <taxon>Desulfurococcales</taxon>
        <taxon>Desulfurococcaceae</taxon>
        <taxon>Staphylothermus</taxon>
    </lineage>
</organism>
<gene>
    <name evidence="1" type="primary">rpl21e</name>
    <name type="ordered locus">Smar_0775</name>
</gene>
<dbReference type="EMBL" id="CP000575">
    <property type="protein sequence ID" value="ABN69876.1"/>
    <property type="molecule type" value="Genomic_DNA"/>
</dbReference>
<dbReference type="RefSeq" id="WP_011839067.1">
    <property type="nucleotide sequence ID" value="NC_009033.1"/>
</dbReference>
<dbReference type="SMR" id="A3DML6"/>
<dbReference type="STRING" id="399550.Smar_0775"/>
<dbReference type="GeneID" id="4906617"/>
<dbReference type="KEGG" id="smr:Smar_0775"/>
<dbReference type="eggNOG" id="arCOG04129">
    <property type="taxonomic scope" value="Archaea"/>
</dbReference>
<dbReference type="HOGENOM" id="CLU_103610_1_1_2"/>
<dbReference type="OrthoDB" id="6295at2157"/>
<dbReference type="Proteomes" id="UP000000254">
    <property type="component" value="Chromosome"/>
</dbReference>
<dbReference type="GO" id="GO:1990904">
    <property type="term" value="C:ribonucleoprotein complex"/>
    <property type="evidence" value="ECO:0007669"/>
    <property type="project" value="UniProtKB-KW"/>
</dbReference>
<dbReference type="GO" id="GO:0005840">
    <property type="term" value="C:ribosome"/>
    <property type="evidence" value="ECO:0007669"/>
    <property type="project" value="UniProtKB-KW"/>
</dbReference>
<dbReference type="GO" id="GO:0003735">
    <property type="term" value="F:structural constituent of ribosome"/>
    <property type="evidence" value="ECO:0007669"/>
    <property type="project" value="InterPro"/>
</dbReference>
<dbReference type="GO" id="GO:0006412">
    <property type="term" value="P:translation"/>
    <property type="evidence" value="ECO:0007669"/>
    <property type="project" value="UniProtKB-UniRule"/>
</dbReference>
<dbReference type="FunFam" id="2.30.30.70:FF:000001">
    <property type="entry name" value="60S ribosomal protein L21"/>
    <property type="match status" value="1"/>
</dbReference>
<dbReference type="Gene3D" id="2.30.30.70">
    <property type="entry name" value="Ribosomal protein L21"/>
    <property type="match status" value="1"/>
</dbReference>
<dbReference type="HAMAP" id="MF_00369">
    <property type="entry name" value="Ribosomal_eL21"/>
    <property type="match status" value="1"/>
</dbReference>
<dbReference type="InterPro" id="IPR001147">
    <property type="entry name" value="Ribosomal_eL21"/>
</dbReference>
<dbReference type="InterPro" id="IPR022856">
    <property type="entry name" value="Ribosomal_eL21_arc"/>
</dbReference>
<dbReference type="InterPro" id="IPR018259">
    <property type="entry name" value="Ribosomal_eL21_CS"/>
</dbReference>
<dbReference type="InterPro" id="IPR036948">
    <property type="entry name" value="Ribosomal_eL21_sf"/>
</dbReference>
<dbReference type="InterPro" id="IPR008991">
    <property type="entry name" value="Translation_prot_SH3-like_sf"/>
</dbReference>
<dbReference type="NCBIfam" id="NF003303">
    <property type="entry name" value="PRK04306.1"/>
    <property type="match status" value="1"/>
</dbReference>
<dbReference type="PANTHER" id="PTHR20981">
    <property type="entry name" value="60S RIBOSOMAL PROTEIN L21"/>
    <property type="match status" value="1"/>
</dbReference>
<dbReference type="Pfam" id="PF01157">
    <property type="entry name" value="Ribosomal_L21e"/>
    <property type="match status" value="1"/>
</dbReference>
<dbReference type="SUPFAM" id="SSF50104">
    <property type="entry name" value="Translation proteins SH3-like domain"/>
    <property type="match status" value="1"/>
</dbReference>
<dbReference type="PROSITE" id="PS01171">
    <property type="entry name" value="RIBOSOMAL_L21E"/>
    <property type="match status" value="1"/>
</dbReference>
<keyword id="KW-1185">Reference proteome</keyword>
<keyword id="KW-0687">Ribonucleoprotein</keyword>
<keyword id="KW-0689">Ribosomal protein</keyword>
<evidence type="ECO:0000255" key="1">
    <source>
        <dbReference type="HAMAP-Rule" id="MF_00369"/>
    </source>
</evidence>
<evidence type="ECO:0000305" key="2"/>
<feature type="chain" id="PRO_1000007130" description="Large ribosomal subunit protein eL21">
    <location>
        <begin position="1"/>
        <end position="99"/>
    </location>
</feature>
<proteinExistence type="inferred from homology"/>
<name>RL21_STAMF</name>
<comment type="similarity">
    <text evidence="1">Belongs to the eukaryotic ribosomal protein eL21 family.</text>
</comment>
<reference key="1">
    <citation type="journal article" date="2009" name="BMC Genomics">
        <title>The complete genome sequence of Staphylothermus marinus reveals differences in sulfur metabolism among heterotrophic Crenarchaeota.</title>
        <authorList>
            <person name="Anderson I.J."/>
            <person name="Dharmarajan L."/>
            <person name="Rodriguez J."/>
            <person name="Hooper S."/>
            <person name="Porat I."/>
            <person name="Ulrich L.E."/>
            <person name="Elkins J.G."/>
            <person name="Mavromatis K."/>
            <person name="Sun H."/>
            <person name="Land M."/>
            <person name="Lapidus A."/>
            <person name="Lucas S."/>
            <person name="Barry K."/>
            <person name="Huber H."/>
            <person name="Zhulin I.B."/>
            <person name="Whitman W.B."/>
            <person name="Mukhopadhyay B."/>
            <person name="Woese C."/>
            <person name="Bristow J."/>
            <person name="Kyrpides N."/>
        </authorList>
    </citation>
    <scope>NUCLEOTIDE SEQUENCE [LARGE SCALE GENOMIC DNA]</scope>
    <source>
        <strain>ATCC 43588 / DSM 3639 / JCM 9404 / F1</strain>
    </source>
</reference>
<reference key="2">
    <citation type="journal article" date="2009" name="Stand. Genomic Sci.">
        <title>Complete genome sequence of Staphylothermus marinus Stetter and Fiala 1986 type strain F1.</title>
        <authorList>
            <person name="Anderson I.J."/>
            <person name="Sun H."/>
            <person name="Lapidus A."/>
            <person name="Copeland A."/>
            <person name="Glavina Del Rio T."/>
            <person name="Tice H."/>
            <person name="Dalin E."/>
            <person name="Lucas S."/>
            <person name="Barry K."/>
            <person name="Land M."/>
            <person name="Richardson P."/>
            <person name="Huber H."/>
            <person name="Kyrpides N.C."/>
        </authorList>
    </citation>
    <scope>NUCLEOTIDE SEQUENCE [LARGE SCALE GENOMIC DNA]</scope>
    <source>
        <strain>ATCC 43588 / DSM 3639 / JCM 9404 / F1</strain>
    </source>
</reference>
<sequence>MVKAPRGYRHRTRKVFSKHIREKGAVPPLSLLMIDYKPGDKVHIVVNPAIHKGMPHRRYHGKTGTIIGKRGKAYIVKITLGDKEKTLFIRPEHLRPAKA</sequence>
<accession>A3DML6</accession>